<keyword id="KW-0004">4Fe-4S</keyword>
<keyword id="KW-0249">Electron transport</keyword>
<keyword id="KW-0408">Iron</keyword>
<keyword id="KW-0411">Iron-sulfur</keyword>
<keyword id="KW-0479">Metal-binding</keyword>
<keyword id="KW-0560">Oxidoreductase</keyword>
<keyword id="KW-0677">Repeat</keyword>
<keyword id="KW-0813">Transport</keyword>
<dbReference type="EC" id="1.5.99.15" evidence="4"/>
<dbReference type="EMBL" id="AE008384">
    <property type="protein sequence ID" value="AAM31550.1"/>
    <property type="molecule type" value="Genomic_DNA"/>
</dbReference>
<dbReference type="RefSeq" id="WP_011033789.1">
    <property type="nucleotide sequence ID" value="NC_003901.1"/>
</dbReference>
<dbReference type="SMR" id="Q8PVV3"/>
<dbReference type="KEGG" id="mma:MM_1854"/>
<dbReference type="PATRIC" id="fig|192952.21.peg.2137"/>
<dbReference type="eggNOG" id="arCOG01705">
    <property type="taxonomic scope" value="Archaea"/>
</dbReference>
<dbReference type="HOGENOM" id="CLU_098523_0_0_2"/>
<dbReference type="BioCyc" id="MetaCyc:MONOMER-18689"/>
<dbReference type="BRENDA" id="1.5.99.15">
    <property type="organism ID" value="3270"/>
</dbReference>
<dbReference type="UniPathway" id="UPA00065"/>
<dbReference type="Proteomes" id="UP000000595">
    <property type="component" value="Chromosome"/>
</dbReference>
<dbReference type="GO" id="GO:0051539">
    <property type="term" value="F:4 iron, 4 sulfur cluster binding"/>
    <property type="evidence" value="ECO:0000314"/>
    <property type="project" value="UniProtKB"/>
</dbReference>
<dbReference type="GO" id="GO:0044684">
    <property type="term" value="F:dihydromethanopterin reductase activity"/>
    <property type="evidence" value="ECO:0007669"/>
    <property type="project" value="UniProtKB-EC"/>
</dbReference>
<dbReference type="GO" id="GO:0046872">
    <property type="term" value="F:metal ion binding"/>
    <property type="evidence" value="ECO:0007669"/>
    <property type="project" value="UniProtKB-KW"/>
</dbReference>
<dbReference type="GO" id="GO:0016645">
    <property type="term" value="F:oxidoreductase activity, acting on the CH-NH group of donors"/>
    <property type="evidence" value="ECO:0000314"/>
    <property type="project" value="UniProtKB"/>
</dbReference>
<dbReference type="GO" id="GO:1901285">
    <property type="term" value="P:5,6,7,8-tetrahydromethanopterin biosynthetic process"/>
    <property type="evidence" value="ECO:0000314"/>
    <property type="project" value="UniProtKB"/>
</dbReference>
<dbReference type="FunFam" id="3.40.50.1950:FF:000008">
    <property type="entry name" value="Indolepyruvate oxidoreductase subunit IorA"/>
    <property type="match status" value="1"/>
</dbReference>
<dbReference type="Gene3D" id="3.30.70.3270">
    <property type="match status" value="1"/>
</dbReference>
<dbReference type="Gene3D" id="3.40.50.1950">
    <property type="entry name" value="Flavin prenyltransferase-like"/>
    <property type="match status" value="1"/>
</dbReference>
<dbReference type="InterPro" id="IPR017896">
    <property type="entry name" value="4Fe4S_Fe-S-bd"/>
</dbReference>
<dbReference type="InterPro" id="IPR017900">
    <property type="entry name" value="4Fe4S_Fe_S_CS"/>
</dbReference>
<dbReference type="InterPro" id="IPR014073">
    <property type="entry name" value="DmrX"/>
</dbReference>
<dbReference type="InterPro" id="IPR036551">
    <property type="entry name" value="Flavin_trans-like"/>
</dbReference>
<dbReference type="InterPro" id="IPR003382">
    <property type="entry name" value="Flavoprotein"/>
</dbReference>
<dbReference type="NCBIfam" id="TIGR02700">
    <property type="entry name" value="flavo_MJ0208"/>
    <property type="match status" value="1"/>
</dbReference>
<dbReference type="Pfam" id="PF00037">
    <property type="entry name" value="Fer4"/>
    <property type="match status" value="1"/>
</dbReference>
<dbReference type="Pfam" id="PF02441">
    <property type="entry name" value="Flavoprotein"/>
    <property type="match status" value="1"/>
</dbReference>
<dbReference type="SUPFAM" id="SSF52507">
    <property type="entry name" value="Homo-oligomeric flavin-containing Cys decarboxylases, HFCD"/>
    <property type="match status" value="1"/>
</dbReference>
<dbReference type="PROSITE" id="PS00198">
    <property type="entry name" value="4FE4S_FER_1"/>
    <property type="match status" value="1"/>
</dbReference>
<dbReference type="PROSITE" id="PS51379">
    <property type="entry name" value="4FE4S_FER_2"/>
    <property type="match status" value="2"/>
</dbReference>
<reference key="1">
    <citation type="journal article" date="2002" name="J. Mol. Microbiol. Biotechnol.">
        <title>The genome of Methanosarcina mazei: evidence for lateral gene transfer between Bacteria and Archaea.</title>
        <authorList>
            <person name="Deppenmeier U."/>
            <person name="Johann A."/>
            <person name="Hartsch T."/>
            <person name="Merkl R."/>
            <person name="Schmitz R.A."/>
            <person name="Martinez-Arias R."/>
            <person name="Henne A."/>
            <person name="Wiezer A."/>
            <person name="Baeumer S."/>
            <person name="Jacobi C."/>
            <person name="Brueggemann H."/>
            <person name="Lienard T."/>
            <person name="Christmann A."/>
            <person name="Boemecke M."/>
            <person name="Steckel S."/>
            <person name="Bhattacharyya A."/>
            <person name="Lykidis A."/>
            <person name="Overbeek R."/>
            <person name="Klenk H.-P."/>
            <person name="Gunsalus R.P."/>
            <person name="Fritz H.-J."/>
            <person name="Gottschalk G."/>
        </authorList>
    </citation>
    <scope>NUCLEOTIDE SEQUENCE [LARGE SCALE GENOMIC DNA]</scope>
    <source>
        <strain>ATCC BAA-159 / DSM 3647 / Goe1 / Go1 / JCM 11833 / OCM 88</strain>
    </source>
</reference>
<reference key="2">
    <citation type="journal article" date="2014" name="J. Bacteriol.">
        <title>Discovery and characterization of the first archaeal dihydromethanopterin reductase, an iron-sulfur flavoprotein from Methanosarcina mazei.</title>
        <authorList>
            <person name="Wang S."/>
            <person name="Tiongson J."/>
            <person name="Rasche M.E."/>
        </authorList>
    </citation>
    <scope>FUNCTION</scope>
    <scope>CATALYTIC ACTIVITY</scope>
    <scope>COFACTOR</scope>
</reference>
<accession>Q8PVV3</accession>
<proteinExistence type="evidence at protein level"/>
<evidence type="ECO:0000250" key="1"/>
<evidence type="ECO:0000250" key="2">
    <source>
        <dbReference type="UniProtKB" id="Q57661"/>
    </source>
</evidence>
<evidence type="ECO:0000255" key="3">
    <source>
        <dbReference type="PROSITE-ProRule" id="PRU00711"/>
    </source>
</evidence>
<evidence type="ECO:0000269" key="4">
    <source>
    </source>
</evidence>
<evidence type="ECO:0000303" key="5">
    <source>
    </source>
</evidence>
<evidence type="ECO:0000305" key="6"/>
<comment type="function">
    <text evidence="4">Involved in the biosynthesis of tetrahydromethanopterin, a coenzyme used in methanogenesis. Catalyzes the reduction of dihydromethanopterin (H(2)MPT) to tetrahydromethanopterin (H(4)MPT). Ferredoxin may serve as an electron donor.</text>
</comment>
<comment type="catalytic activity">
    <reaction evidence="4">
        <text>5,6,7,8-tetrahydromethanopterin + A = 7,8-dihydromethanopterin + AH2</text>
        <dbReference type="Rhea" id="RHEA:42804"/>
        <dbReference type="ChEBI" id="CHEBI:13193"/>
        <dbReference type="ChEBI" id="CHEBI:17499"/>
        <dbReference type="ChEBI" id="CHEBI:58103"/>
        <dbReference type="ChEBI" id="CHEBI:72788"/>
        <dbReference type="EC" id="1.5.99.15"/>
    </reaction>
</comment>
<comment type="cofactor">
    <cofactor evidence="5">
        <name>[4Fe-4S] cluster</name>
        <dbReference type="ChEBI" id="CHEBI:49883"/>
    </cofactor>
    <text evidence="5">Binds 2 [4Fe-4S] clusters.</text>
</comment>
<comment type="pathway">
    <text evidence="6">Cofactor biosynthesis; 5,6,7,8-tetrahydromethanopterin biosynthesis.</text>
</comment>
<comment type="subunit">
    <text evidence="2">Homodimer.</text>
</comment>
<feature type="chain" id="PRO_0000430941" description="Dihydromethanopterin reductase (acceptor)">
    <location>
        <begin position="1"/>
        <end position="239"/>
    </location>
</feature>
<feature type="domain" description="4Fe-4S ferredoxin-type 1" evidence="3">
    <location>
        <begin position="144"/>
        <end position="175"/>
    </location>
</feature>
<feature type="domain" description="4Fe-4S ferredoxin-type 2" evidence="3">
    <location>
        <begin position="176"/>
        <end position="205"/>
    </location>
</feature>
<feature type="binding site" evidence="1">
    <location>
        <position position="153"/>
    </location>
    <ligand>
        <name>[4Fe-4S] cluster</name>
        <dbReference type="ChEBI" id="CHEBI:49883"/>
        <label>1</label>
    </ligand>
</feature>
<feature type="binding site" evidence="1">
    <location>
        <position position="156"/>
    </location>
    <ligand>
        <name>[4Fe-4S] cluster</name>
        <dbReference type="ChEBI" id="CHEBI:49883"/>
        <label>1</label>
    </ligand>
</feature>
<feature type="binding site" evidence="1">
    <location>
        <position position="159"/>
    </location>
    <ligand>
        <name>[4Fe-4S] cluster</name>
        <dbReference type="ChEBI" id="CHEBI:49883"/>
        <label>1</label>
    </ligand>
</feature>
<feature type="binding site" evidence="1">
    <location>
        <position position="165"/>
    </location>
    <ligand>
        <name>[4Fe-4S] cluster</name>
        <dbReference type="ChEBI" id="CHEBI:49883"/>
        <label>2</label>
    </ligand>
</feature>
<feature type="binding site" evidence="1">
    <location>
        <position position="185"/>
    </location>
    <ligand>
        <name>[4Fe-4S] cluster</name>
        <dbReference type="ChEBI" id="CHEBI:49883"/>
        <label>2</label>
    </ligand>
</feature>
<feature type="binding site" evidence="1">
    <location>
        <position position="188"/>
    </location>
    <ligand>
        <name>[4Fe-4S] cluster</name>
        <dbReference type="ChEBI" id="CHEBI:49883"/>
        <label>2</label>
    </ligand>
</feature>
<feature type="binding site" evidence="1">
    <location>
        <position position="191"/>
    </location>
    <ligand>
        <name>[4Fe-4S] cluster</name>
        <dbReference type="ChEBI" id="CHEBI:49883"/>
        <label>2</label>
    </ligand>
</feature>
<feature type="binding site" evidence="1">
    <location>
        <position position="195"/>
    </location>
    <ligand>
        <name>[4Fe-4S] cluster</name>
        <dbReference type="ChEBI" id="CHEBI:49883"/>
        <label>1</label>
    </ligand>
</feature>
<protein>
    <recommendedName>
        <fullName evidence="5">Dihydromethanopterin reductase (acceptor)</fullName>
        <shortName evidence="5">H(2)MPT reductase</shortName>
        <ecNumber evidence="4">1.5.99.15</ecNumber>
    </recommendedName>
</protein>
<organism>
    <name type="scientific">Methanosarcina mazei (strain ATCC BAA-159 / DSM 3647 / Goe1 / Go1 / JCM 11833 / OCM 88)</name>
    <name type="common">Methanosarcina frisia</name>
    <dbReference type="NCBI Taxonomy" id="192952"/>
    <lineage>
        <taxon>Archaea</taxon>
        <taxon>Methanobacteriati</taxon>
        <taxon>Methanobacteriota</taxon>
        <taxon>Stenosarchaea group</taxon>
        <taxon>Methanomicrobia</taxon>
        <taxon>Methanosarcinales</taxon>
        <taxon>Methanosarcinaceae</taxon>
        <taxon>Methanosarcina</taxon>
    </lineage>
</organism>
<gene>
    <name evidence="5" type="primary">dmrX</name>
    <name type="ordered locus">MM_1854</name>
</gene>
<sequence length="239" mass="26491">MSFQRIAWGITGAGHFLDRSYQVFKELKLRNPELSVNTYVSRAAEEVLRMYGLEQKLVKISGGDYLEEIFRESEQGSSSPKVGRFALDRYDALFVTPATSNTVSKIAYGIADSLVTNAVSQAVKGRVPVFVVPVDIEGSIISEMPYNIDRKQCKHCETCPPRENCPHEAISEKNGVTDQIDLLKCKGCGICKELCPYNAIKGGPVEVLVRDVDMRNVEIVKSLQGITVLESPEAILELF</sequence>
<name>DMRX_METMA</name>